<organism>
    <name type="scientific">Salmonella paratyphi A (strain ATCC 9150 / SARB42)</name>
    <dbReference type="NCBI Taxonomy" id="295319"/>
    <lineage>
        <taxon>Bacteria</taxon>
        <taxon>Pseudomonadati</taxon>
        <taxon>Pseudomonadota</taxon>
        <taxon>Gammaproteobacteria</taxon>
        <taxon>Enterobacterales</taxon>
        <taxon>Enterobacteriaceae</taxon>
        <taxon>Salmonella</taxon>
    </lineage>
</organism>
<dbReference type="EC" id="3.4.16.4" evidence="1"/>
<dbReference type="EMBL" id="CP000026">
    <property type="protein sequence ID" value="AAV76402.1"/>
    <property type="molecule type" value="Genomic_DNA"/>
</dbReference>
<dbReference type="SMR" id="Q5PCQ2"/>
<dbReference type="MEROPS" id="S12.A03"/>
<dbReference type="KEGG" id="spt:SPA0391"/>
<dbReference type="HOGENOM" id="CLU_020027_1_2_6"/>
<dbReference type="Proteomes" id="UP000008185">
    <property type="component" value="Chromosome"/>
</dbReference>
<dbReference type="GO" id="GO:0005886">
    <property type="term" value="C:plasma membrane"/>
    <property type="evidence" value="ECO:0007669"/>
    <property type="project" value="UniProtKB-SubCell"/>
</dbReference>
<dbReference type="GO" id="GO:0009002">
    <property type="term" value="F:serine-type D-Ala-D-Ala carboxypeptidase activity"/>
    <property type="evidence" value="ECO:0007669"/>
    <property type="project" value="UniProtKB-UniRule"/>
</dbReference>
<dbReference type="GO" id="GO:0006508">
    <property type="term" value="P:proteolysis"/>
    <property type="evidence" value="ECO:0007669"/>
    <property type="project" value="UniProtKB-KW"/>
</dbReference>
<dbReference type="Gene3D" id="3.40.710.10">
    <property type="entry name" value="DD-peptidase/beta-lactamase superfamily"/>
    <property type="match status" value="1"/>
</dbReference>
<dbReference type="HAMAP" id="MF_01034">
    <property type="entry name" value="S12_YfeW"/>
    <property type="match status" value="1"/>
</dbReference>
<dbReference type="InterPro" id="IPR001466">
    <property type="entry name" value="Beta-lactam-related"/>
</dbReference>
<dbReference type="InterPro" id="IPR012338">
    <property type="entry name" value="Beta-lactam/transpept-like"/>
</dbReference>
<dbReference type="InterPro" id="IPR050789">
    <property type="entry name" value="Diverse_Enzym_Activities"/>
</dbReference>
<dbReference type="InterPro" id="IPR022849">
    <property type="entry name" value="Pept_S12_YfeW/YbbE-like"/>
</dbReference>
<dbReference type="NCBIfam" id="NF002968">
    <property type="entry name" value="PRK03642.1"/>
    <property type="match status" value="1"/>
</dbReference>
<dbReference type="PANTHER" id="PTHR43283">
    <property type="entry name" value="BETA-LACTAMASE-RELATED"/>
    <property type="match status" value="1"/>
</dbReference>
<dbReference type="PANTHER" id="PTHR43283:SF11">
    <property type="entry name" value="BETA-LACTAMASE-RELATED DOMAIN-CONTAINING PROTEIN"/>
    <property type="match status" value="1"/>
</dbReference>
<dbReference type="Pfam" id="PF00144">
    <property type="entry name" value="Beta-lactamase"/>
    <property type="match status" value="1"/>
</dbReference>
<dbReference type="SUPFAM" id="SSF56601">
    <property type="entry name" value="beta-lactamase/transpeptidase-like"/>
    <property type="match status" value="1"/>
</dbReference>
<sequence>MKFTLVATVLLTFSLSAFAVEYPVLTTASPDQVGFDSQKLHRLDGWIQNQIDAGYPSINLLVIKDNHIVLQKAWGYAKKYDGSTLLAHPIRATTNTMYDLASNTKMYATNFALQKLVYEGKIDVNDLVSKYIPGVKDMPGDKIKGKDKLRIIDILHHVAGFPADPQYPNKNVAGKLFSQSKSTTLEMIKKTPLEYQPGSKHIYSDVDYMILGFIIESITAMPLDRYVETTIYKPLGLKHTVFNPLMKGFTPPQIAATELHGNTRDGVIHFPNIRTNTLWGQVHDEKAWYSMGGVSGHAGLFSDTHDMAVLMQVMLNGGGYGNVKLFDDKTVAQFTRRSPEDATFGLGWRVNGNASMTPTFGVLASPQTYGHTGWTGTLTSIDPVNHMAIVILGNRPHSPVANPKVNPNVFVSGLLPAATYGWIVDQIYGSLK</sequence>
<gene>
    <name evidence="1" type="primary">yfeW</name>
    <name type="ordered locus">SPA0391</name>
</gene>
<name>YFEW_SALPA</name>
<evidence type="ECO:0000255" key="1">
    <source>
        <dbReference type="HAMAP-Rule" id="MF_01034"/>
    </source>
</evidence>
<reference key="1">
    <citation type="journal article" date="2004" name="Nat. Genet.">
        <title>Comparison of genome degradation in Paratyphi A and Typhi, human-restricted serovars of Salmonella enterica that cause typhoid.</title>
        <authorList>
            <person name="McClelland M."/>
            <person name="Sanderson K.E."/>
            <person name="Clifton S.W."/>
            <person name="Latreille P."/>
            <person name="Porwollik S."/>
            <person name="Sabo A."/>
            <person name="Meyer R."/>
            <person name="Bieri T."/>
            <person name="Ozersky P."/>
            <person name="McLellan M."/>
            <person name="Harkins C.R."/>
            <person name="Wang C."/>
            <person name="Nguyen C."/>
            <person name="Berghoff A."/>
            <person name="Elliott G."/>
            <person name="Kohlberg S."/>
            <person name="Strong C."/>
            <person name="Du F."/>
            <person name="Carter J."/>
            <person name="Kremizki C."/>
            <person name="Layman D."/>
            <person name="Leonard S."/>
            <person name="Sun H."/>
            <person name="Fulton L."/>
            <person name="Nash W."/>
            <person name="Miner T."/>
            <person name="Minx P."/>
            <person name="Delehaunty K."/>
            <person name="Fronick C."/>
            <person name="Magrini V."/>
            <person name="Nhan M."/>
            <person name="Warren W."/>
            <person name="Florea L."/>
            <person name="Spieth J."/>
            <person name="Wilson R.K."/>
        </authorList>
    </citation>
    <scope>NUCLEOTIDE SEQUENCE [LARGE SCALE GENOMIC DNA]</scope>
    <source>
        <strain>ATCC 9150 / SARB42</strain>
    </source>
</reference>
<keyword id="KW-0121">Carboxypeptidase</keyword>
<keyword id="KW-0997">Cell inner membrane</keyword>
<keyword id="KW-1003">Cell membrane</keyword>
<keyword id="KW-0378">Hydrolase</keyword>
<keyword id="KW-0472">Membrane</keyword>
<keyword id="KW-0645">Protease</keyword>
<keyword id="KW-0812">Transmembrane</keyword>
<keyword id="KW-1133">Transmembrane helix</keyword>
<proteinExistence type="inferred from homology"/>
<protein>
    <recommendedName>
        <fullName evidence="1">Putative D-alanyl-D-alanine carboxypeptidase</fullName>
        <ecNumber evidence="1">3.4.16.4</ecNumber>
    </recommendedName>
    <alternativeName>
        <fullName evidence="1">DD-carboxypeptidase</fullName>
        <shortName evidence="1">DD-CPase</shortName>
    </alternativeName>
</protein>
<comment type="catalytic activity">
    <reaction evidence="1">
        <text>Preferential cleavage: (Ac)2-L-Lys-D-Ala-|-D-Ala. Also transpeptidation of peptidyl-alanyl moieties that are N-acyl substituents of D-alanine.</text>
        <dbReference type="EC" id="3.4.16.4"/>
    </reaction>
</comment>
<comment type="subcellular location">
    <subcellularLocation>
        <location evidence="1">Cell inner membrane</location>
        <topology evidence="1">Single-pass membrane protein</topology>
    </subcellularLocation>
</comment>
<comment type="similarity">
    <text evidence="1">Belongs to the peptidase S12 family. YfeW subfamily.</text>
</comment>
<accession>Q5PCQ2</accession>
<feature type="chain" id="PRO_1000149444" description="Putative D-alanyl-D-alanine carboxypeptidase">
    <location>
        <begin position="1"/>
        <end position="432"/>
    </location>
</feature>
<feature type="transmembrane region" description="Helical; Signal-anchor" evidence="1">
    <location>
        <begin position="7"/>
        <end position="25"/>
    </location>
</feature>